<sequence>MTLWEDFMFEIKSKDGLGRTGILKTEHGTVRTPALMPVIHPGKQTIDVKGPGAEIVITNAYIIYRNPELRERALSDGVHRLIDFDGPIMTDSGSFQLSEYGDIEVENPEIIRFQDEIGTDIGTSLDIPTPPGVSHRRAIEEVEVTLERARESIEYRERMMLNAVVQGSTHPDLRRYCASRLAELPVELHPIGAVVPLMESYRYRELVDAVLSSVSELPPSRPRHLMGAGHPMLFALAVSMGCDLFDSAAYILYAEDDRLLSTEGTYKLENLQEMPCSCSVCTDYTPSELMGMDREERRNLIAEHNLHVSFAEIRKVRQAIHDGNLMELVEERCRAHPRLLEGYRRMSEYLDLIEKFEPRSKRSAFFYTGPESLGRVEVHRHLKRVKEHLGERLALVAPSRRPYSSSLPARIGGFSSLRPQSGGPWRVVVVDLPFGIIPLELDQVYPLAQSDAPGIMDLDGEEFLRGLVRDLMDGDAIVDDALCSELGIELPYKYMGEVETTVDDLDRVRMVADYQFGMGAGELLFTDDVRIERSRNTGKIRHIYAGDELICTMRASDGLLVLGAEGAVRLHKGTDYPAWRVAVNEESEPFARKGKSVFAKFIIDCDNNIRANDEVLIVNADDELLATGKALLCAEEMMDLNHGQAVKTRKGGF</sequence>
<evidence type="ECO:0000255" key="1">
    <source>
        <dbReference type="HAMAP-Rule" id="MF_01634"/>
    </source>
</evidence>
<evidence type="ECO:0000305" key="2"/>
<name>ATGT_METTH</name>
<reference key="1">
    <citation type="journal article" date="1997" name="J. Bacteriol.">
        <title>Complete genome sequence of Methanobacterium thermoautotrophicum deltaH: functional analysis and comparative genomics.</title>
        <authorList>
            <person name="Smith D.R."/>
            <person name="Doucette-Stamm L.A."/>
            <person name="Deloughery C."/>
            <person name="Lee H.-M."/>
            <person name="Dubois J."/>
            <person name="Aldredge T."/>
            <person name="Bashirzadeh R."/>
            <person name="Blakely D."/>
            <person name="Cook R."/>
            <person name="Gilbert K."/>
            <person name="Harrison D."/>
            <person name="Hoang L."/>
            <person name="Keagle P."/>
            <person name="Lumm W."/>
            <person name="Pothier B."/>
            <person name="Qiu D."/>
            <person name="Spadafora R."/>
            <person name="Vicare R."/>
            <person name="Wang Y."/>
            <person name="Wierzbowski J."/>
            <person name="Gibson R."/>
            <person name="Jiwani N."/>
            <person name="Caruso A."/>
            <person name="Bush D."/>
            <person name="Safer H."/>
            <person name="Patwell D."/>
            <person name="Prabhakar S."/>
            <person name="McDougall S."/>
            <person name="Shimer G."/>
            <person name="Goyal A."/>
            <person name="Pietrovski S."/>
            <person name="Church G.M."/>
            <person name="Daniels C.J."/>
            <person name="Mao J.-I."/>
            <person name="Rice P."/>
            <person name="Noelling J."/>
            <person name="Reeve J.N."/>
        </authorList>
    </citation>
    <scope>NUCLEOTIDE SEQUENCE [LARGE SCALE GENOMIC DNA]</scope>
    <source>
        <strain>ATCC 29096 / DSM 1053 / JCM 10044 / NBRC 100330 / Delta H</strain>
    </source>
</reference>
<keyword id="KW-0328">Glycosyltransferase</keyword>
<keyword id="KW-0479">Metal-binding</keyword>
<keyword id="KW-1185">Reference proteome</keyword>
<keyword id="KW-0808">Transferase</keyword>
<keyword id="KW-0819">tRNA processing</keyword>
<keyword id="KW-0862">Zinc</keyword>
<proteinExistence type="inferred from homology"/>
<dbReference type="EC" id="2.4.2.48" evidence="1"/>
<dbReference type="EMBL" id="AE000666">
    <property type="protein sequence ID" value="AAB84682.1"/>
    <property type="status" value="ALT_INIT"/>
    <property type="molecule type" value="Genomic_DNA"/>
</dbReference>
<dbReference type="PIR" id="H69101">
    <property type="entry name" value="H69101"/>
</dbReference>
<dbReference type="SMR" id="O26278"/>
<dbReference type="FunCoup" id="O26278">
    <property type="interactions" value="21"/>
</dbReference>
<dbReference type="STRING" id="187420.MTH_176"/>
<dbReference type="PaxDb" id="187420-MTH_176"/>
<dbReference type="EnsemblBacteria" id="AAB84682">
    <property type="protein sequence ID" value="AAB84682"/>
    <property type="gene ID" value="MTH_176"/>
</dbReference>
<dbReference type="KEGG" id="mth:MTH_176"/>
<dbReference type="PATRIC" id="fig|187420.15.peg.149"/>
<dbReference type="HOGENOM" id="CLU_030083_0_0_2"/>
<dbReference type="InParanoid" id="O26278"/>
<dbReference type="UniPathway" id="UPA00393"/>
<dbReference type="Proteomes" id="UP000005223">
    <property type="component" value="Chromosome"/>
</dbReference>
<dbReference type="GO" id="GO:0005737">
    <property type="term" value="C:cytoplasm"/>
    <property type="evidence" value="ECO:0007669"/>
    <property type="project" value="TreeGrafter"/>
</dbReference>
<dbReference type="GO" id="GO:0016763">
    <property type="term" value="F:pentosyltransferase activity"/>
    <property type="evidence" value="ECO:0007669"/>
    <property type="project" value="UniProtKB-UniRule"/>
</dbReference>
<dbReference type="GO" id="GO:0003723">
    <property type="term" value="F:RNA binding"/>
    <property type="evidence" value="ECO:0007669"/>
    <property type="project" value="InterPro"/>
</dbReference>
<dbReference type="GO" id="GO:0008270">
    <property type="term" value="F:zinc ion binding"/>
    <property type="evidence" value="ECO:0007669"/>
    <property type="project" value="UniProtKB-UniRule"/>
</dbReference>
<dbReference type="GO" id="GO:0002099">
    <property type="term" value="P:tRNA wobble guanine modification"/>
    <property type="evidence" value="ECO:0007669"/>
    <property type="project" value="TreeGrafter"/>
</dbReference>
<dbReference type="CDD" id="cd21149">
    <property type="entry name" value="PUA_archaeosine_TGT"/>
    <property type="match status" value="1"/>
</dbReference>
<dbReference type="Gene3D" id="3.10.450.90">
    <property type="entry name" value="ArcTGT, C2 domain"/>
    <property type="match status" value="1"/>
</dbReference>
<dbReference type="Gene3D" id="2.30.130.10">
    <property type="entry name" value="PUA domain"/>
    <property type="match status" value="1"/>
</dbReference>
<dbReference type="Gene3D" id="3.20.20.105">
    <property type="entry name" value="Queuine tRNA-ribosyltransferase-like"/>
    <property type="match status" value="1"/>
</dbReference>
<dbReference type="Gene3D" id="3.40.50.10630">
    <property type="entry name" value="Uracil-DNA glycosylase-like"/>
    <property type="match status" value="1"/>
</dbReference>
<dbReference type="HAMAP" id="MF_01634">
    <property type="entry name" value="TgtA_arch"/>
    <property type="match status" value="1"/>
</dbReference>
<dbReference type="InterPro" id="IPR050076">
    <property type="entry name" value="ArchSynthase1/Queuine_TRR"/>
</dbReference>
<dbReference type="InterPro" id="IPR002478">
    <property type="entry name" value="PUA"/>
</dbReference>
<dbReference type="InterPro" id="IPR015947">
    <property type="entry name" value="PUA-like_sf"/>
</dbReference>
<dbReference type="InterPro" id="IPR036974">
    <property type="entry name" value="PUA_sf"/>
</dbReference>
<dbReference type="InterPro" id="IPR036511">
    <property type="entry name" value="TGT-like_sf"/>
</dbReference>
<dbReference type="InterPro" id="IPR029402">
    <property type="entry name" value="TGT_C2"/>
</dbReference>
<dbReference type="InterPro" id="IPR038250">
    <property type="entry name" value="TGT_C2_sf"/>
</dbReference>
<dbReference type="InterPro" id="IPR004804">
    <property type="entry name" value="TgtA"/>
</dbReference>
<dbReference type="InterPro" id="IPR002616">
    <property type="entry name" value="tRNA_ribo_trans-like"/>
</dbReference>
<dbReference type="InterPro" id="IPR004521">
    <property type="entry name" value="Uncharacterised_CHP00451"/>
</dbReference>
<dbReference type="NCBIfam" id="TIGR00432">
    <property type="entry name" value="arcsn_tRNA_tgt"/>
    <property type="match status" value="1"/>
</dbReference>
<dbReference type="NCBIfam" id="TIGR00449">
    <property type="entry name" value="tgt_general"/>
    <property type="match status" value="1"/>
</dbReference>
<dbReference type="NCBIfam" id="TIGR00451">
    <property type="entry name" value="unchar_dom_2"/>
    <property type="match status" value="1"/>
</dbReference>
<dbReference type="PANTHER" id="PTHR46499">
    <property type="entry name" value="QUEUINE TRNA-RIBOSYLTRANSFERASE"/>
    <property type="match status" value="1"/>
</dbReference>
<dbReference type="PANTHER" id="PTHR46499:SF1">
    <property type="entry name" value="QUEUINE TRNA-RIBOSYLTRANSFERASE"/>
    <property type="match status" value="1"/>
</dbReference>
<dbReference type="Pfam" id="PF01472">
    <property type="entry name" value="PUA"/>
    <property type="match status" value="1"/>
</dbReference>
<dbReference type="Pfam" id="PF01702">
    <property type="entry name" value="TGT"/>
    <property type="match status" value="1"/>
</dbReference>
<dbReference type="Pfam" id="PF14810">
    <property type="entry name" value="TGT_C2"/>
    <property type="match status" value="1"/>
</dbReference>
<dbReference type="SMART" id="SM00359">
    <property type="entry name" value="PUA"/>
    <property type="match status" value="1"/>
</dbReference>
<dbReference type="SUPFAM" id="SSF88802">
    <property type="entry name" value="Pre-PUA domain"/>
    <property type="match status" value="1"/>
</dbReference>
<dbReference type="SUPFAM" id="SSF88697">
    <property type="entry name" value="PUA domain-like"/>
    <property type="match status" value="1"/>
</dbReference>
<dbReference type="SUPFAM" id="SSF51713">
    <property type="entry name" value="tRNA-guanine transglycosylase"/>
    <property type="match status" value="1"/>
</dbReference>
<dbReference type="PROSITE" id="PS50890">
    <property type="entry name" value="PUA"/>
    <property type="match status" value="1"/>
</dbReference>
<protein>
    <recommendedName>
        <fullName evidence="1">tRNA-guanine(15) transglycosylase</fullName>
        <ecNumber evidence="1">2.4.2.48</ecNumber>
    </recommendedName>
    <alternativeName>
        <fullName evidence="1">7-cyano-7-deazaguanine tRNA-ribosyltransferase</fullName>
    </alternativeName>
    <alternativeName>
        <fullName evidence="1">Archaeal tRNA-guanine transglycosylase</fullName>
    </alternativeName>
</protein>
<feature type="chain" id="PRO_0000135573" description="tRNA-guanine(15) transglycosylase">
    <location>
        <begin position="1"/>
        <end position="653"/>
    </location>
</feature>
<feature type="domain" description="PUA" evidence="1">
    <location>
        <begin position="578"/>
        <end position="653"/>
    </location>
</feature>
<feature type="active site" description="Nucleophile" evidence="1">
    <location>
        <position position="91"/>
    </location>
</feature>
<feature type="binding site" evidence="1">
    <location>
        <position position="126"/>
    </location>
    <ligand>
        <name>substrate</name>
    </ligand>
</feature>
<feature type="binding site" evidence="1">
    <location>
        <position position="193"/>
    </location>
    <ligand>
        <name>substrate</name>
    </ligand>
</feature>
<feature type="binding site" evidence="1">
    <location>
        <position position="276"/>
    </location>
    <ligand>
        <name>Zn(2+)</name>
        <dbReference type="ChEBI" id="CHEBI:29105"/>
    </ligand>
</feature>
<feature type="binding site" evidence="1">
    <location>
        <position position="278"/>
    </location>
    <ligand>
        <name>Zn(2+)</name>
        <dbReference type="ChEBI" id="CHEBI:29105"/>
    </ligand>
</feature>
<feature type="binding site" evidence="1">
    <location>
        <position position="281"/>
    </location>
    <ligand>
        <name>Zn(2+)</name>
        <dbReference type="ChEBI" id="CHEBI:29105"/>
    </ligand>
</feature>
<gene>
    <name evidence="1" type="primary">tgtA</name>
    <name type="ordered locus">MTH_176</name>
</gene>
<comment type="function">
    <text evidence="1">Exchanges the guanine residue with 7-cyano-7-deazaguanine (preQ0) at position 15 in the dihydrouridine loop (D-loop) of archaeal tRNAs.</text>
</comment>
<comment type="catalytic activity">
    <reaction evidence="1">
        <text>guanosine(15) in tRNA + 7-cyano-7-deazaguanine = 7-cyano-7-carbaguanosine(15) in tRNA + guanine</text>
        <dbReference type="Rhea" id="RHEA:43164"/>
        <dbReference type="Rhea" id="RHEA-COMP:10371"/>
        <dbReference type="Rhea" id="RHEA-COMP:10372"/>
        <dbReference type="ChEBI" id="CHEBI:16235"/>
        <dbReference type="ChEBI" id="CHEBI:45075"/>
        <dbReference type="ChEBI" id="CHEBI:74269"/>
        <dbReference type="ChEBI" id="CHEBI:82850"/>
        <dbReference type="EC" id="2.4.2.48"/>
    </reaction>
</comment>
<comment type="cofactor">
    <cofactor evidence="1">
        <name>Zn(2+)</name>
        <dbReference type="ChEBI" id="CHEBI:29105"/>
    </cofactor>
    <text evidence="1">Binds 1 zinc ion per subunit.</text>
</comment>
<comment type="pathway">
    <text evidence="1">tRNA modification; archaeosine-tRNA biosynthesis.</text>
</comment>
<comment type="similarity">
    <text evidence="1">Belongs to the archaeosine tRNA-ribosyltransferase family.</text>
</comment>
<comment type="sequence caution" evidence="2">
    <conflict type="erroneous initiation">
        <sequence resource="EMBL-CDS" id="AAB84682"/>
    </conflict>
    <text>Extended N-terminus.</text>
</comment>
<accession>O26278</accession>
<organism>
    <name type="scientific">Methanothermobacter thermautotrophicus (strain ATCC 29096 / DSM 1053 / JCM 10044 / NBRC 100330 / Delta H)</name>
    <name type="common">Methanobacterium thermoautotrophicum</name>
    <dbReference type="NCBI Taxonomy" id="187420"/>
    <lineage>
        <taxon>Archaea</taxon>
        <taxon>Methanobacteriati</taxon>
        <taxon>Methanobacteriota</taxon>
        <taxon>Methanomada group</taxon>
        <taxon>Methanobacteria</taxon>
        <taxon>Methanobacteriales</taxon>
        <taxon>Methanobacteriaceae</taxon>
        <taxon>Methanothermobacter</taxon>
    </lineage>
</organism>